<sequence length="712" mass="77816">MASAAANNSSSAAYDAAETGGLLRRRNTTAAARGNAGEEEEEAEAVAPSVEQAFADKPVPSWREQLTVRAFVVGFLLSIMFNIIVMKLSLTTGVIPSLNVSASLLGFFLVRLWTAAIERVGFLKQPFTRQENTVIQTCVVSAYGVAFSGGFGSYLFGMSETIAKQATEANDPMNIKNPHLGWIIGFMFLVSFVGLFALVPMRKVMIVDYKLTYPSGTATAYLINGFHTPEGADLAKKQVRTLGKYFSISFLWAFFQWFYTAGDNCGFSSFPTFGLEAFKNRFYFDFSPTYVGVGMICPYIVNVSLLIGGIISWGIMWPLISKKKGSWYPETLPESSLLGLQAYKVFITIAVILGDGLYNFVKVFGYTIKGFIVMYKNKNSNTLPISDNGTPANATEEESFDDKRRNELFLKDQIPKTVAIGGYVVLAVITSGCLPLIIPQLKWYYILIAYIFAPIMAFCNAYGSGLTDWSLATTYGKLAIFVFGAWAGASHGGVLVGLAACGVMMNIVGTASDLMQDFKTGYMTLASPRSMFVSQVIGTAMGCVIAPCVFWLFYKSFNIGASDGAYPAPYTIMYRNMAILGVNGLSSLPKYCLTLCYIAFVAAFIINLIKDLVPERVAKYIPIPMAAAIPFYLGPYFAIDMFMGSVILYFWEWRNKDEAQSFGPAVASGLMCGDGLWALPQAVLSLVNVNPPLCMKFLSRAANAKVDTFLGN</sequence>
<proteinExistence type="evidence at transcript level"/>
<evidence type="ECO:0000250" key="1"/>
<evidence type="ECO:0000255" key="2"/>
<evidence type="ECO:0000256" key="3">
    <source>
        <dbReference type="SAM" id="MobiDB-lite"/>
    </source>
</evidence>
<evidence type="ECO:0000305" key="4"/>
<protein>
    <recommendedName>
        <fullName>Probable metal-nicotianamine transporter YSL11</fullName>
    </recommendedName>
    <alternativeName>
        <fullName>Protein YELLOW STRIPE LIKE 11</fullName>
        <shortName>OsYSL11</shortName>
    </alternativeName>
</protein>
<organism>
    <name type="scientific">Oryza sativa subsp. japonica</name>
    <name type="common">Rice</name>
    <dbReference type="NCBI Taxonomy" id="39947"/>
    <lineage>
        <taxon>Eukaryota</taxon>
        <taxon>Viridiplantae</taxon>
        <taxon>Streptophyta</taxon>
        <taxon>Embryophyta</taxon>
        <taxon>Tracheophyta</taxon>
        <taxon>Spermatophyta</taxon>
        <taxon>Magnoliopsida</taxon>
        <taxon>Liliopsida</taxon>
        <taxon>Poales</taxon>
        <taxon>Poaceae</taxon>
        <taxon>BOP clade</taxon>
        <taxon>Oryzoideae</taxon>
        <taxon>Oryzeae</taxon>
        <taxon>Oryzinae</taxon>
        <taxon>Oryza</taxon>
        <taxon>Oryza sativa</taxon>
    </lineage>
</organism>
<gene>
    <name type="primary">YSL11</name>
    <name type="ordered locus">Os04g0524900</name>
    <name type="ordered locus">LOC_Os04g44330</name>
    <name type="ORF">OsJ_014870</name>
    <name type="ORF">OSJNBa0038O10.1</name>
    <name type="ORF">OSJNBb0065J09.18</name>
</gene>
<name>YSL11_ORYSJ</name>
<dbReference type="EMBL" id="AB190921">
    <property type="protein sequence ID" value="BAE91891.1"/>
    <property type="molecule type" value="mRNA"/>
</dbReference>
<dbReference type="EMBL" id="AL663010">
    <property type="protein sequence ID" value="CAI44638.1"/>
    <property type="molecule type" value="Genomic_DNA"/>
</dbReference>
<dbReference type="EMBL" id="AL663019">
    <property type="protein sequence ID" value="CAE05635.1"/>
    <property type="molecule type" value="Genomic_DNA"/>
</dbReference>
<dbReference type="EMBL" id="AP008210">
    <property type="protein sequence ID" value="BAF15267.2"/>
    <property type="status" value="ALT_SEQ"/>
    <property type="molecule type" value="Genomic_DNA"/>
</dbReference>
<dbReference type="EMBL" id="AP014960">
    <property type="protein sequence ID" value="BAS90153.1"/>
    <property type="molecule type" value="Genomic_DNA"/>
</dbReference>
<dbReference type="EMBL" id="CM000141">
    <property type="protein sequence ID" value="EAZ31387.1"/>
    <property type="molecule type" value="Genomic_DNA"/>
</dbReference>
<dbReference type="RefSeq" id="XP_015635780.1">
    <property type="nucleotide sequence ID" value="XM_015780294.1"/>
</dbReference>
<dbReference type="SMR" id="Q7X660"/>
<dbReference type="FunCoup" id="Q7X660">
    <property type="interactions" value="127"/>
</dbReference>
<dbReference type="STRING" id="39947.Q7X660"/>
<dbReference type="PaxDb" id="39947-Q7X660"/>
<dbReference type="EnsemblPlants" id="Os04t0524900-00">
    <property type="protein sequence ID" value="Os04t0524900-00"/>
    <property type="gene ID" value="Os04g0524900"/>
</dbReference>
<dbReference type="Gramene" id="Os04t0524900-00">
    <property type="protein sequence ID" value="Os04t0524900-00"/>
    <property type="gene ID" value="Os04g0524900"/>
</dbReference>
<dbReference type="KEGG" id="dosa:Os04g0524900"/>
<dbReference type="eggNOG" id="ENOG502QUDW">
    <property type="taxonomic scope" value="Eukaryota"/>
</dbReference>
<dbReference type="HOGENOM" id="CLU_015477_2_0_1"/>
<dbReference type="InParanoid" id="Q7X660"/>
<dbReference type="OMA" id="SWYSESL"/>
<dbReference type="OrthoDB" id="627262at2759"/>
<dbReference type="Proteomes" id="UP000000763">
    <property type="component" value="Chromosome 4"/>
</dbReference>
<dbReference type="Proteomes" id="UP000007752">
    <property type="component" value="Chromosome 4"/>
</dbReference>
<dbReference type="Proteomes" id="UP000059680">
    <property type="component" value="Chromosome 4"/>
</dbReference>
<dbReference type="GO" id="GO:0016020">
    <property type="term" value="C:membrane"/>
    <property type="evidence" value="ECO:0000318"/>
    <property type="project" value="GO_Central"/>
</dbReference>
<dbReference type="GO" id="GO:0035673">
    <property type="term" value="F:oligopeptide transmembrane transporter activity"/>
    <property type="evidence" value="ECO:0007669"/>
    <property type="project" value="InterPro"/>
</dbReference>
<dbReference type="InterPro" id="IPR004813">
    <property type="entry name" value="OPT"/>
</dbReference>
<dbReference type="InterPro" id="IPR045035">
    <property type="entry name" value="YSL-like"/>
</dbReference>
<dbReference type="NCBIfam" id="TIGR00728">
    <property type="entry name" value="OPT_sfam"/>
    <property type="match status" value="1"/>
</dbReference>
<dbReference type="PANTHER" id="PTHR31645:SF12">
    <property type="entry name" value="METAL-NICOTIANAMINE TRANSPORTER YSL11-RELATED"/>
    <property type="match status" value="1"/>
</dbReference>
<dbReference type="PANTHER" id="PTHR31645">
    <property type="entry name" value="OLIGOPEPTIDE TRANSPORTER YGL114W-RELATED"/>
    <property type="match status" value="1"/>
</dbReference>
<dbReference type="Pfam" id="PF03169">
    <property type="entry name" value="OPT"/>
    <property type="match status" value="1"/>
</dbReference>
<accession>Q7X660</accession>
<accession>A0A0N7KJE0</accession>
<accession>Q0JBM0</accession>
<accession>Q25CH5</accession>
<accession>Q5JQD6</accession>
<keyword id="KW-0472">Membrane</keyword>
<keyword id="KW-1185">Reference proteome</keyword>
<keyword id="KW-0812">Transmembrane</keyword>
<keyword id="KW-1133">Transmembrane helix</keyword>
<keyword id="KW-0813">Transport</keyword>
<comment type="function">
    <text evidence="1">May be involved in the transport of nicotianamine-chelated metals.</text>
</comment>
<comment type="subcellular location">
    <subcellularLocation>
        <location evidence="4">Membrane</location>
        <topology evidence="4">Multi-pass membrane protein</topology>
    </subcellularLocation>
</comment>
<comment type="similarity">
    <text evidence="4">Belongs to the YSL (TC 2.A.67.2) family.</text>
</comment>
<comment type="sequence caution" evidence="4">
    <conflict type="erroneous gene model prediction">
        <sequence resource="EMBL-CDS" id="BAF15267"/>
    </conflict>
</comment>
<feature type="chain" id="PRO_0000363874" description="Probable metal-nicotianamine transporter YSL11">
    <location>
        <begin position="1"/>
        <end position="712"/>
    </location>
</feature>
<feature type="transmembrane region" description="Helical" evidence="2">
    <location>
        <begin position="70"/>
        <end position="90"/>
    </location>
</feature>
<feature type="transmembrane region" description="Helical" evidence="2">
    <location>
        <begin position="93"/>
        <end position="113"/>
    </location>
</feature>
<feature type="transmembrane region" description="Helical" evidence="2">
    <location>
        <begin position="138"/>
        <end position="158"/>
    </location>
</feature>
<feature type="transmembrane region" description="Helical" evidence="2">
    <location>
        <begin position="180"/>
        <end position="200"/>
    </location>
</feature>
<feature type="transmembrane region" description="Helical" evidence="2">
    <location>
        <begin position="242"/>
        <end position="262"/>
    </location>
</feature>
<feature type="transmembrane region" description="Helical" evidence="2">
    <location>
        <begin position="300"/>
        <end position="320"/>
    </location>
</feature>
<feature type="transmembrane region" description="Helical" evidence="2">
    <location>
        <begin position="345"/>
        <end position="365"/>
    </location>
</feature>
<feature type="transmembrane region" description="Helical" evidence="2">
    <location>
        <begin position="418"/>
        <end position="438"/>
    </location>
</feature>
<feature type="transmembrane region" description="Helical" evidence="2">
    <location>
        <begin position="446"/>
        <end position="466"/>
    </location>
</feature>
<feature type="transmembrane region" description="Helical" evidence="2">
    <location>
        <begin position="478"/>
        <end position="498"/>
    </location>
</feature>
<feature type="transmembrane region" description="Helical" evidence="2">
    <location>
        <begin position="532"/>
        <end position="552"/>
    </location>
</feature>
<feature type="transmembrane region" description="Helical" evidence="2">
    <location>
        <begin position="593"/>
        <end position="613"/>
    </location>
</feature>
<feature type="transmembrane region" description="Helical" evidence="2">
    <location>
        <begin position="631"/>
        <end position="651"/>
    </location>
</feature>
<feature type="transmembrane region" description="Helical" evidence="2">
    <location>
        <begin position="666"/>
        <end position="686"/>
    </location>
</feature>
<feature type="region of interest" description="Disordered" evidence="3">
    <location>
        <begin position="25"/>
        <end position="48"/>
    </location>
</feature>
<feature type="sequence conflict" description="In Ref. 1; BAE91891." evidence="4" ref="1">
    <original>F</original>
    <variation>L</variation>
    <location>
        <position position="127"/>
    </location>
</feature>
<reference key="1">
    <citation type="journal article" date="2004" name="Plant J.">
        <title>OsYSL2 is a rice metal-nicotianamine transporter that is regulated by iron and expressed in the phloem.</title>
        <authorList>
            <person name="Koike S."/>
            <person name="Inoue H."/>
            <person name="Mizuno D."/>
            <person name="Takahashi M."/>
            <person name="Nakanishi H."/>
            <person name="Mori S."/>
            <person name="Nishizawa N.K."/>
        </authorList>
    </citation>
    <scope>NUCLEOTIDE SEQUENCE [MRNA]</scope>
    <scope>GENE FAMILY</scope>
    <scope>NOMENCLATURE</scope>
    <source>
        <strain>cv. Nipponbare</strain>
    </source>
</reference>
<reference key="2">
    <citation type="journal article" date="2002" name="Nature">
        <title>Sequence and analysis of rice chromosome 4.</title>
        <authorList>
            <person name="Feng Q."/>
            <person name="Zhang Y."/>
            <person name="Hao P."/>
            <person name="Wang S."/>
            <person name="Fu G."/>
            <person name="Huang Y."/>
            <person name="Li Y."/>
            <person name="Zhu J."/>
            <person name="Liu Y."/>
            <person name="Hu X."/>
            <person name="Jia P."/>
            <person name="Zhang Y."/>
            <person name="Zhao Q."/>
            <person name="Ying K."/>
            <person name="Yu S."/>
            <person name="Tang Y."/>
            <person name="Weng Q."/>
            <person name="Zhang L."/>
            <person name="Lu Y."/>
            <person name="Mu J."/>
            <person name="Lu Y."/>
            <person name="Zhang L.S."/>
            <person name="Yu Z."/>
            <person name="Fan D."/>
            <person name="Liu X."/>
            <person name="Lu T."/>
            <person name="Li C."/>
            <person name="Wu Y."/>
            <person name="Sun T."/>
            <person name="Lei H."/>
            <person name="Li T."/>
            <person name="Hu H."/>
            <person name="Guan J."/>
            <person name="Wu M."/>
            <person name="Zhang R."/>
            <person name="Zhou B."/>
            <person name="Chen Z."/>
            <person name="Chen L."/>
            <person name="Jin Z."/>
            <person name="Wang R."/>
            <person name="Yin H."/>
            <person name="Cai Z."/>
            <person name="Ren S."/>
            <person name="Lv G."/>
            <person name="Gu W."/>
            <person name="Zhu G."/>
            <person name="Tu Y."/>
            <person name="Jia J."/>
            <person name="Zhang Y."/>
            <person name="Chen J."/>
            <person name="Kang H."/>
            <person name="Chen X."/>
            <person name="Shao C."/>
            <person name="Sun Y."/>
            <person name="Hu Q."/>
            <person name="Zhang X."/>
            <person name="Zhang W."/>
            <person name="Wang L."/>
            <person name="Ding C."/>
            <person name="Sheng H."/>
            <person name="Gu J."/>
            <person name="Chen S."/>
            <person name="Ni L."/>
            <person name="Zhu F."/>
            <person name="Chen W."/>
            <person name="Lan L."/>
            <person name="Lai Y."/>
            <person name="Cheng Z."/>
            <person name="Gu M."/>
            <person name="Jiang J."/>
            <person name="Li J."/>
            <person name="Hong G."/>
            <person name="Xue Y."/>
            <person name="Han B."/>
        </authorList>
    </citation>
    <scope>NUCLEOTIDE SEQUENCE [LARGE SCALE GENOMIC DNA]</scope>
    <source>
        <strain>cv. Nipponbare</strain>
    </source>
</reference>
<reference key="3">
    <citation type="journal article" date="2005" name="Nature">
        <title>The map-based sequence of the rice genome.</title>
        <authorList>
            <consortium name="International rice genome sequencing project (IRGSP)"/>
        </authorList>
    </citation>
    <scope>NUCLEOTIDE SEQUENCE [LARGE SCALE GENOMIC DNA]</scope>
    <source>
        <strain>cv. Nipponbare</strain>
    </source>
</reference>
<reference key="4">
    <citation type="journal article" date="2008" name="Nucleic Acids Res.">
        <title>The rice annotation project database (RAP-DB): 2008 update.</title>
        <authorList>
            <consortium name="The rice annotation project (RAP)"/>
        </authorList>
    </citation>
    <scope>GENOME REANNOTATION</scope>
    <source>
        <strain>cv. Nipponbare</strain>
    </source>
</reference>
<reference key="5">
    <citation type="journal article" date="2013" name="Rice">
        <title>Improvement of the Oryza sativa Nipponbare reference genome using next generation sequence and optical map data.</title>
        <authorList>
            <person name="Kawahara Y."/>
            <person name="de la Bastide M."/>
            <person name="Hamilton J.P."/>
            <person name="Kanamori H."/>
            <person name="McCombie W.R."/>
            <person name="Ouyang S."/>
            <person name="Schwartz D.C."/>
            <person name="Tanaka T."/>
            <person name="Wu J."/>
            <person name="Zhou S."/>
            <person name="Childs K.L."/>
            <person name="Davidson R.M."/>
            <person name="Lin H."/>
            <person name="Quesada-Ocampo L."/>
            <person name="Vaillancourt B."/>
            <person name="Sakai H."/>
            <person name="Lee S.S."/>
            <person name="Kim J."/>
            <person name="Numa H."/>
            <person name="Itoh T."/>
            <person name="Buell C.R."/>
            <person name="Matsumoto T."/>
        </authorList>
    </citation>
    <scope>GENOME REANNOTATION</scope>
    <source>
        <strain>cv. Nipponbare</strain>
    </source>
</reference>
<reference key="6">
    <citation type="journal article" date="2005" name="PLoS Biol.">
        <title>The genomes of Oryza sativa: a history of duplications.</title>
        <authorList>
            <person name="Yu J."/>
            <person name="Wang J."/>
            <person name="Lin W."/>
            <person name="Li S."/>
            <person name="Li H."/>
            <person name="Zhou J."/>
            <person name="Ni P."/>
            <person name="Dong W."/>
            <person name="Hu S."/>
            <person name="Zeng C."/>
            <person name="Zhang J."/>
            <person name="Zhang Y."/>
            <person name="Li R."/>
            <person name="Xu Z."/>
            <person name="Li S."/>
            <person name="Li X."/>
            <person name="Zheng H."/>
            <person name="Cong L."/>
            <person name="Lin L."/>
            <person name="Yin J."/>
            <person name="Geng J."/>
            <person name="Li G."/>
            <person name="Shi J."/>
            <person name="Liu J."/>
            <person name="Lv H."/>
            <person name="Li J."/>
            <person name="Wang J."/>
            <person name="Deng Y."/>
            <person name="Ran L."/>
            <person name="Shi X."/>
            <person name="Wang X."/>
            <person name="Wu Q."/>
            <person name="Li C."/>
            <person name="Ren X."/>
            <person name="Wang J."/>
            <person name="Wang X."/>
            <person name="Li D."/>
            <person name="Liu D."/>
            <person name="Zhang X."/>
            <person name="Ji Z."/>
            <person name="Zhao W."/>
            <person name="Sun Y."/>
            <person name="Zhang Z."/>
            <person name="Bao J."/>
            <person name="Han Y."/>
            <person name="Dong L."/>
            <person name="Ji J."/>
            <person name="Chen P."/>
            <person name="Wu S."/>
            <person name="Liu J."/>
            <person name="Xiao Y."/>
            <person name="Bu D."/>
            <person name="Tan J."/>
            <person name="Yang L."/>
            <person name="Ye C."/>
            <person name="Zhang J."/>
            <person name="Xu J."/>
            <person name="Zhou Y."/>
            <person name="Yu Y."/>
            <person name="Zhang B."/>
            <person name="Zhuang S."/>
            <person name="Wei H."/>
            <person name="Liu B."/>
            <person name="Lei M."/>
            <person name="Yu H."/>
            <person name="Li Y."/>
            <person name="Xu H."/>
            <person name="Wei S."/>
            <person name="He X."/>
            <person name="Fang L."/>
            <person name="Zhang Z."/>
            <person name="Zhang Y."/>
            <person name="Huang X."/>
            <person name="Su Z."/>
            <person name="Tong W."/>
            <person name="Li J."/>
            <person name="Tong Z."/>
            <person name="Li S."/>
            <person name="Ye J."/>
            <person name="Wang L."/>
            <person name="Fang L."/>
            <person name="Lei T."/>
            <person name="Chen C.-S."/>
            <person name="Chen H.-C."/>
            <person name="Xu Z."/>
            <person name="Li H."/>
            <person name="Huang H."/>
            <person name="Zhang F."/>
            <person name="Xu H."/>
            <person name="Li N."/>
            <person name="Zhao C."/>
            <person name="Li S."/>
            <person name="Dong L."/>
            <person name="Huang Y."/>
            <person name="Li L."/>
            <person name="Xi Y."/>
            <person name="Qi Q."/>
            <person name="Li W."/>
            <person name="Zhang B."/>
            <person name="Hu W."/>
            <person name="Zhang Y."/>
            <person name="Tian X."/>
            <person name="Jiao Y."/>
            <person name="Liang X."/>
            <person name="Jin J."/>
            <person name="Gao L."/>
            <person name="Zheng W."/>
            <person name="Hao B."/>
            <person name="Liu S.-M."/>
            <person name="Wang W."/>
            <person name="Yuan L."/>
            <person name="Cao M."/>
            <person name="McDermott J."/>
            <person name="Samudrala R."/>
            <person name="Wang J."/>
            <person name="Wong G.K.-S."/>
            <person name="Yang H."/>
        </authorList>
    </citation>
    <scope>NUCLEOTIDE SEQUENCE [LARGE SCALE GENOMIC DNA]</scope>
    <source>
        <strain>cv. Nipponbare</strain>
    </source>
</reference>